<proteinExistence type="predicted"/>
<keyword id="KW-1185">Reference proteome</keyword>
<organism>
    <name type="scientific">Treponema pallidum (strain Nichols)</name>
    <dbReference type="NCBI Taxonomy" id="243276"/>
    <lineage>
        <taxon>Bacteria</taxon>
        <taxon>Pseudomonadati</taxon>
        <taxon>Spirochaetota</taxon>
        <taxon>Spirochaetia</taxon>
        <taxon>Spirochaetales</taxon>
        <taxon>Treponemataceae</taxon>
        <taxon>Treponema</taxon>
    </lineage>
</organism>
<feature type="chain" id="PRO_0000202259" description="Uncharacterized protein TP_0466">
    <location>
        <begin position="1"/>
        <end position="389"/>
    </location>
</feature>
<gene>
    <name type="ordered locus">TP_0466</name>
</gene>
<accession>O83479</accession>
<dbReference type="EMBL" id="AE000520">
    <property type="protein sequence ID" value="AAC65459.1"/>
    <property type="molecule type" value="Genomic_DNA"/>
</dbReference>
<dbReference type="PIR" id="D71321">
    <property type="entry name" value="D71321"/>
</dbReference>
<dbReference type="RefSeq" id="WP_010881915.1">
    <property type="nucleotide sequence ID" value="NC_021490.2"/>
</dbReference>
<dbReference type="IntAct" id="O83479">
    <property type="interactions" value="1"/>
</dbReference>
<dbReference type="STRING" id="243276.TP_0466"/>
<dbReference type="EnsemblBacteria" id="AAC65459">
    <property type="protein sequence ID" value="AAC65459"/>
    <property type="gene ID" value="TP_0466"/>
</dbReference>
<dbReference type="KEGG" id="tpa:TP_0466"/>
<dbReference type="KEGG" id="tpw:TPANIC_0466"/>
<dbReference type="eggNOG" id="ENOG5033SDH">
    <property type="taxonomic scope" value="Bacteria"/>
</dbReference>
<dbReference type="HOGENOM" id="CLU_058631_0_0_12"/>
<dbReference type="OrthoDB" id="355505at2"/>
<dbReference type="Proteomes" id="UP000000811">
    <property type="component" value="Chromosome"/>
</dbReference>
<protein>
    <recommendedName>
        <fullName>Uncharacterized protein TP_0466</fullName>
    </recommendedName>
</protein>
<name>Y466_TREPA</name>
<reference key="1">
    <citation type="journal article" date="1998" name="Science">
        <title>Complete genome sequence of Treponema pallidum, the syphilis spirochete.</title>
        <authorList>
            <person name="Fraser C.M."/>
            <person name="Norris S.J."/>
            <person name="Weinstock G.M."/>
            <person name="White O."/>
            <person name="Sutton G.G."/>
            <person name="Dodson R.J."/>
            <person name="Gwinn M.L."/>
            <person name="Hickey E.K."/>
            <person name="Clayton R.A."/>
            <person name="Ketchum K.A."/>
            <person name="Sodergren E."/>
            <person name="Hardham J.M."/>
            <person name="McLeod M.P."/>
            <person name="Salzberg S.L."/>
            <person name="Peterson J.D."/>
            <person name="Khalak H.G."/>
            <person name="Richardson D.L."/>
            <person name="Howell J.K."/>
            <person name="Chidambaram M."/>
            <person name="Utterback T.R."/>
            <person name="McDonald L.A."/>
            <person name="Artiach P."/>
            <person name="Bowman C."/>
            <person name="Cotton M.D."/>
            <person name="Fujii C."/>
            <person name="Garland S.A."/>
            <person name="Hatch B."/>
            <person name="Horst K."/>
            <person name="Roberts K.M."/>
            <person name="Sandusky M."/>
            <person name="Weidman J.F."/>
            <person name="Smith H.O."/>
            <person name="Venter J.C."/>
        </authorList>
    </citation>
    <scope>NUCLEOTIDE SEQUENCE [LARGE SCALE GENOMIC DNA]</scope>
    <source>
        <strain>Nichols</strain>
    </source>
</reference>
<sequence length="389" mass="44762">MSSKHKRRILNLPLKLVLTQEGSEFFIKQNRKLMKLKLAEHVEDYGIALDAFAPKTVQGLLLSGYVSLIEVSPPEFASSRQEIIDLSKLIVHSILYRQYDCYVFRQILNSEVIKKWNRSNPGSSIDEHANLNAPFIYNHLKQHEAHVTQIKHHILRLLHASLAACEERTPKEKNTLLFLGEKFLDTLRPFTWFIISKFQHAPDMGSVLSSIHTSLAQYLNKARIAEYIALVLVELLINEENTNLKKEVQKLFPDLEDAQEALCDEGIRRRIVAELKHNAESLFISWKLQGRSVSTAGTRRKLKITVYGRNDYPQEMRNCLQDAKVVNADTDTLVDYCQQTIDTAKHANLGVYYISYLSEACKEANVRFESSLNRFTRSEFTTVDLSFEF</sequence>